<comment type="function">
    <text evidence="1">Tetrapolymerization of the monopyrrole PBG into the hydroxymethylbilane pre-uroporphyrinogen in several discrete steps.</text>
</comment>
<comment type="catalytic activity">
    <reaction evidence="1">
        <text>4 porphobilinogen + H2O = hydroxymethylbilane + 4 NH4(+)</text>
        <dbReference type="Rhea" id="RHEA:13185"/>
        <dbReference type="ChEBI" id="CHEBI:15377"/>
        <dbReference type="ChEBI" id="CHEBI:28938"/>
        <dbReference type="ChEBI" id="CHEBI:57845"/>
        <dbReference type="ChEBI" id="CHEBI:58126"/>
        <dbReference type="EC" id="2.5.1.61"/>
    </reaction>
</comment>
<comment type="cofactor">
    <cofactor evidence="1">
        <name>dipyrromethane</name>
        <dbReference type="ChEBI" id="CHEBI:60342"/>
    </cofactor>
    <text evidence="1">Binds 1 dipyrromethane group covalently.</text>
</comment>
<comment type="pathway">
    <text evidence="1">Porphyrin-containing compound metabolism; protoporphyrin-IX biosynthesis; coproporphyrinogen-III from 5-aminolevulinate: step 2/4.</text>
</comment>
<comment type="subunit">
    <text evidence="1">Monomer.</text>
</comment>
<comment type="miscellaneous">
    <text evidence="1">The porphobilinogen subunits are added to the dipyrromethane group.</text>
</comment>
<comment type="similarity">
    <text evidence="1">Belongs to the HMBS family.</text>
</comment>
<gene>
    <name evidence="1" type="primary">hemC</name>
    <name type="ordered locus">CKR_0640</name>
</gene>
<protein>
    <recommendedName>
        <fullName evidence="1">Porphobilinogen deaminase</fullName>
        <shortName evidence="1">PBG</shortName>
        <ecNumber evidence="1">2.5.1.61</ecNumber>
    </recommendedName>
    <alternativeName>
        <fullName evidence="1">Hydroxymethylbilane synthase</fullName>
        <shortName evidence="1">HMBS</shortName>
    </alternativeName>
    <alternativeName>
        <fullName evidence="1">Pre-uroporphyrinogen synthase</fullName>
    </alternativeName>
</protein>
<accession>B9DZL6</accession>
<organism>
    <name type="scientific">Clostridium kluyveri (strain NBRC 12016)</name>
    <dbReference type="NCBI Taxonomy" id="583346"/>
    <lineage>
        <taxon>Bacteria</taxon>
        <taxon>Bacillati</taxon>
        <taxon>Bacillota</taxon>
        <taxon>Clostridia</taxon>
        <taxon>Eubacteriales</taxon>
        <taxon>Clostridiaceae</taxon>
        <taxon>Clostridium</taxon>
    </lineage>
</organism>
<reference key="1">
    <citation type="submission" date="2005-09" db="EMBL/GenBank/DDBJ databases">
        <title>Complete genome sequence of Clostridium kluyveri and comparative genomics of Clostridia species.</title>
        <authorList>
            <person name="Inui M."/>
            <person name="Nonaka H."/>
            <person name="Shinoda Y."/>
            <person name="Ikenaga Y."/>
            <person name="Abe M."/>
            <person name="Naito K."/>
            <person name="Vertes A.A."/>
            <person name="Yukawa H."/>
        </authorList>
    </citation>
    <scope>NUCLEOTIDE SEQUENCE [LARGE SCALE GENOMIC DNA]</scope>
    <source>
        <strain>NBRC 12016</strain>
    </source>
</reference>
<sequence>MSFRIATRKSKLALVQTDYVIDLLALKFKMQCEKVLIRTEGDRKLDVSLDKIGGKGVFVKDIEKALIEKRAQAAVHSMKDMPNELLDLFEIIAMPVREDVRDVFISPEGIKFLDLPKGAVIGTSSIRRAVQIKNLRHDIEIVPIRGNIETRVRKMKEEKLDGIVLAAAGVKRLGMSEIITEYFNPFEFIPAVGQGAIGVEILKNSEYASTLGKIDNEDIRMGVEAERSFLKKLQGDCHTPVGAYSVIEGEILNITGIFQVGNKLIKKDVCGDKWDYIALGESLGEKIISG</sequence>
<feature type="chain" id="PRO_1000125666" description="Porphobilinogen deaminase">
    <location>
        <begin position="1"/>
        <end position="290"/>
    </location>
</feature>
<feature type="modified residue" description="S-(dipyrrolylmethanemethyl)cysteine" evidence="1">
    <location>
        <position position="237"/>
    </location>
</feature>
<dbReference type="EC" id="2.5.1.61" evidence="1"/>
<dbReference type="EMBL" id="AP009049">
    <property type="protein sequence ID" value="BAH05691.1"/>
    <property type="molecule type" value="Genomic_DNA"/>
</dbReference>
<dbReference type="RefSeq" id="WP_012620215.1">
    <property type="nucleotide sequence ID" value="NC_011837.1"/>
</dbReference>
<dbReference type="SMR" id="B9DZL6"/>
<dbReference type="KEGG" id="ckr:CKR_0640"/>
<dbReference type="HOGENOM" id="CLU_019704_0_2_9"/>
<dbReference type="UniPathway" id="UPA00251">
    <property type="reaction ID" value="UER00319"/>
</dbReference>
<dbReference type="Proteomes" id="UP000007969">
    <property type="component" value="Chromosome"/>
</dbReference>
<dbReference type="GO" id="GO:0005737">
    <property type="term" value="C:cytoplasm"/>
    <property type="evidence" value="ECO:0007669"/>
    <property type="project" value="TreeGrafter"/>
</dbReference>
<dbReference type="GO" id="GO:0004418">
    <property type="term" value="F:hydroxymethylbilane synthase activity"/>
    <property type="evidence" value="ECO:0007669"/>
    <property type="project" value="UniProtKB-UniRule"/>
</dbReference>
<dbReference type="GO" id="GO:0006782">
    <property type="term" value="P:protoporphyrinogen IX biosynthetic process"/>
    <property type="evidence" value="ECO:0007669"/>
    <property type="project" value="UniProtKB-UniRule"/>
</dbReference>
<dbReference type="FunFam" id="3.40.190.10:FF:000005">
    <property type="entry name" value="Porphobilinogen deaminase"/>
    <property type="match status" value="1"/>
</dbReference>
<dbReference type="Gene3D" id="3.40.190.10">
    <property type="entry name" value="Periplasmic binding protein-like II"/>
    <property type="match status" value="2"/>
</dbReference>
<dbReference type="Gene3D" id="3.30.160.40">
    <property type="entry name" value="Porphobilinogen deaminase, C-terminal domain"/>
    <property type="match status" value="1"/>
</dbReference>
<dbReference type="HAMAP" id="MF_00260">
    <property type="entry name" value="Porphobil_deam"/>
    <property type="match status" value="1"/>
</dbReference>
<dbReference type="InterPro" id="IPR000860">
    <property type="entry name" value="HemC"/>
</dbReference>
<dbReference type="InterPro" id="IPR022419">
    <property type="entry name" value="Porphobilin_deaminase_cofac_BS"/>
</dbReference>
<dbReference type="InterPro" id="IPR022417">
    <property type="entry name" value="Porphobilin_deaminase_N"/>
</dbReference>
<dbReference type="InterPro" id="IPR022418">
    <property type="entry name" value="Porphobilinogen_deaminase_C"/>
</dbReference>
<dbReference type="InterPro" id="IPR036803">
    <property type="entry name" value="Porphobilinogen_deaminase_C_sf"/>
</dbReference>
<dbReference type="NCBIfam" id="TIGR00212">
    <property type="entry name" value="hemC"/>
    <property type="match status" value="1"/>
</dbReference>
<dbReference type="PANTHER" id="PTHR11557">
    <property type="entry name" value="PORPHOBILINOGEN DEAMINASE"/>
    <property type="match status" value="1"/>
</dbReference>
<dbReference type="PANTHER" id="PTHR11557:SF0">
    <property type="entry name" value="PORPHOBILINOGEN DEAMINASE"/>
    <property type="match status" value="1"/>
</dbReference>
<dbReference type="Pfam" id="PF01379">
    <property type="entry name" value="Porphobil_deam"/>
    <property type="match status" value="1"/>
</dbReference>
<dbReference type="Pfam" id="PF03900">
    <property type="entry name" value="Porphobil_deamC"/>
    <property type="match status" value="1"/>
</dbReference>
<dbReference type="PIRSF" id="PIRSF001438">
    <property type="entry name" value="4pyrrol_synth_OHMeBilane_synth"/>
    <property type="match status" value="1"/>
</dbReference>
<dbReference type="PRINTS" id="PR00151">
    <property type="entry name" value="PORPHBDMNASE"/>
</dbReference>
<dbReference type="SUPFAM" id="SSF53850">
    <property type="entry name" value="Periplasmic binding protein-like II"/>
    <property type="match status" value="1"/>
</dbReference>
<dbReference type="SUPFAM" id="SSF54782">
    <property type="entry name" value="Porphobilinogen deaminase (hydroxymethylbilane synthase), C-terminal domain"/>
    <property type="match status" value="1"/>
</dbReference>
<dbReference type="PROSITE" id="PS00533">
    <property type="entry name" value="PORPHOBILINOGEN_DEAM"/>
    <property type="match status" value="1"/>
</dbReference>
<keyword id="KW-0627">Porphyrin biosynthesis</keyword>
<keyword id="KW-0808">Transferase</keyword>
<name>HEM3_CLOK1</name>
<proteinExistence type="inferred from homology"/>
<evidence type="ECO:0000255" key="1">
    <source>
        <dbReference type="HAMAP-Rule" id="MF_00260"/>
    </source>
</evidence>